<comment type="function">
    <text evidence="5">Forms the portal vertex of the capsid. This portal plays critical roles in head assembly, genome packaging, neck/tail attachment, and genome ejection. The portal protein multimerizes as a single ring-shaped homododecamer arranged around a central channel.</text>
</comment>
<comment type="subunit">
    <text evidence="1">Homododecamer.</text>
</comment>
<comment type="subcellular location">
    <subcellularLocation>
        <location evidence="3">Virion</location>
    </subcellularLocation>
    <text evidence="3">Present in about 17 copies in the virion.</text>
</comment>
<feature type="chain" id="PRO_0000432923" description="Probable portal protein">
    <location>
        <begin position="1"/>
        <end position="763"/>
    </location>
</feature>
<feature type="region of interest" description="Disordered" evidence="2">
    <location>
        <begin position="668"/>
        <end position="706"/>
    </location>
</feature>
<feature type="region of interest" description="Disordered" evidence="2">
    <location>
        <begin position="729"/>
        <end position="763"/>
    </location>
</feature>
<feature type="compositionally biased region" description="Basic and acidic residues" evidence="2">
    <location>
        <begin position="668"/>
        <end position="679"/>
    </location>
</feature>
<feature type="compositionally biased region" description="Polar residues" evidence="2">
    <location>
        <begin position="680"/>
        <end position="689"/>
    </location>
</feature>
<dbReference type="EMBL" id="EF056009">
    <property type="protein sequence ID" value="ABK54420.1"/>
    <property type="molecule type" value="Genomic_DNA"/>
</dbReference>
<dbReference type="RefSeq" id="YP_950537.1">
    <property type="nucleotide sequence ID" value="NC_008720.1"/>
</dbReference>
<dbReference type="SMR" id="A0MZE1"/>
<dbReference type="KEGG" id="vg:5075648"/>
<dbReference type="Proteomes" id="UP000001789">
    <property type="component" value="Genome"/>
</dbReference>
<dbReference type="GO" id="GO:0044423">
    <property type="term" value="C:virion component"/>
    <property type="evidence" value="ECO:0007669"/>
    <property type="project" value="UniProtKB-KW"/>
</dbReference>
<dbReference type="GO" id="GO:0099002">
    <property type="term" value="P:symbiont genome ejection through host cell envelope, short tail mechanism"/>
    <property type="evidence" value="ECO:0007669"/>
    <property type="project" value="UniProtKB-KW"/>
</dbReference>
<dbReference type="InterPro" id="IPR056909">
    <property type="entry name" value="SU10_portal"/>
</dbReference>
<dbReference type="Pfam" id="PF23899">
    <property type="entry name" value="SU10_portal"/>
    <property type="match status" value="1"/>
</dbReference>
<evidence type="ECO:0000250" key="1">
    <source>
        <dbReference type="UniProtKB" id="P04332"/>
    </source>
</evidence>
<evidence type="ECO:0000256" key="2">
    <source>
        <dbReference type="SAM" id="MobiDB-lite"/>
    </source>
</evidence>
<evidence type="ECO:0000269" key="3">
    <source>
    </source>
</evidence>
<evidence type="ECO:0000305" key="4"/>
<evidence type="ECO:0000305" key="5">
    <source>
    </source>
</evidence>
<evidence type="ECO:0000312" key="6">
    <source>
        <dbReference type="EMBL" id="ABK54420.1"/>
    </source>
</evidence>
<evidence type="ECO:0000312" key="7">
    <source>
        <dbReference type="Proteomes" id="UP000001789"/>
    </source>
</evidence>
<accession>A0MZE1</accession>
<gene>
    <name type="primary">59</name>
</gene>
<proteinExistence type="inferred from homology"/>
<name>PORTL_BPN4</name>
<organismHost>
    <name type="scientific">Escherichia coli</name>
    <dbReference type="NCBI Taxonomy" id="562"/>
</organismHost>
<sequence>MEQNTDSMVPLPDPSQATKLTSWKNELSLQALKADLDAAKPSHTAMMIKVKEWNDLMRIEGKAKPPKVKGRSQVQPKLVRRQAEWRYSALTEPFLGSNKLFKVTPVTWEDVQGARQNELVLNYQFRTKLNRVSFIDNYVRSVVDDGTGIVRVGWNREIRKEKQEVPVFSLFPIQTQEQADALQQALQLRTDNPRGYEENVDEAIKESVRFFDETGQATYAVQTGTTTTEVEVPLANHPTVEMLNPENIIIDPSCQGDINKAMFAIVSFETCKADLLKEKDRYHNLNKIDWQSSAPVNEPDHATTTPQEFQISDPMRKRVVAYEYWGFWDIEGNGVLEPIVATWIGSTLIRLEKNPYPDGKLPFVLIPYMPVKRDMYGEPDAELLGDNQAVLGAVMRGMIDLLGRSANGQRGMPKGMLDALNSRRYREGEDYEYNPTQNPAQMIIEHKFPELPQSALTMATLQNQEAESLTGVKAFAGGVTGESYGDVAAGIRGVLDAASKREMAILRRLAKGMSEIGNKIIAMNAVFLAEHEVVRITNEEFVTIKREDLKGNFDLEVDISTAEVDNQKSQDLGFMLQTIGPNVDQQITLNILAEIADLKRMPKLAHDLRTWQPQPDPVQEQLKQLAVEKAQLENEELRSKIRLNDAQAQKAMAERDNKNLDYLEQESGTKHARDLEKMKAQSQGNQQLEITKALTKPRKEGELPPNLSAAIGYNALTNGEDTGIQSVSERDIAAEANPAYSLGSSQFDPTRDPALNPGIRLGN</sequence>
<reference key="1">
    <citation type="submission" date="2006-11" db="EMBL/GenBank/DDBJ databases">
        <title>Genome sequence and analysis of bacteriophage N4.</title>
        <authorList>
            <person name="Hendrix R.W."/>
            <person name="Rothman-Denes L."/>
            <person name="Hatfull G.F."/>
            <person name="Lawrence J.G."/>
            <person name="Pedulla M."/>
        </authorList>
    </citation>
    <scope>NUCLEOTIDE SEQUENCE [LARGE SCALE GENOMIC DNA]</scope>
</reference>
<reference key="2">
    <citation type="journal article" date="2008" name="J. Mol. Biol.">
        <title>Insight into DNA and protein transport in double-stranded DNA viruses: the structure of bacteriophage N4.</title>
        <authorList>
            <person name="Choi K.H."/>
            <person name="McPartland J."/>
            <person name="Kaganman I."/>
            <person name="Bowman V.D."/>
            <person name="Rothman-Denes L.B."/>
            <person name="Rossmann M.G."/>
        </authorList>
    </citation>
    <scope>FUNCTION</scope>
    <scope>SUBCELLULAR LOCATION</scope>
</reference>
<protein>
    <recommendedName>
        <fullName evidence="4">Probable portal protein</fullName>
    </recommendedName>
    <alternativeName>
        <fullName evidence="6">94 kDa protein</fullName>
    </alternativeName>
    <alternativeName>
        <fullName evidence="4">Gene product 59</fullName>
        <shortName>gp59</shortName>
    </alternativeName>
    <alternativeName>
        <fullName evidence="4">Head-to-tail connector</fullName>
    </alternativeName>
</protein>
<organism evidence="7">
    <name type="scientific">Enterobacteria phage N4</name>
    <name type="common">Bacteriophage N4</name>
    <dbReference type="NCBI Taxonomy" id="2886925"/>
    <lineage>
        <taxon>Viruses</taxon>
        <taxon>Duplodnaviria</taxon>
        <taxon>Heunggongvirae</taxon>
        <taxon>Uroviricota</taxon>
        <taxon>Caudoviricetes</taxon>
        <taxon>Schitoviridae</taxon>
        <taxon>Enquatrovirinae</taxon>
        <taxon>Enquatrovirus</taxon>
        <taxon>Enquatrovirus N4</taxon>
    </lineage>
</organism>
<keyword id="KW-0426">Late protein</keyword>
<keyword id="KW-1185">Reference proteome</keyword>
<keyword id="KW-0118">Viral capsid assembly</keyword>
<keyword id="KW-1171">Viral genome ejection through host cell envelope</keyword>
<keyword id="KW-0231">Viral genome packaging</keyword>
<keyword id="KW-1162">Viral penetration into host cytoplasm</keyword>
<keyword id="KW-1188">Viral release from host cell</keyword>
<keyword id="KW-1244">Viral short tail ejection system</keyword>
<keyword id="KW-0946">Virion</keyword>
<keyword id="KW-1160">Virus entry into host cell</keyword>